<protein>
    <recommendedName>
        <fullName evidence="4">Nostrin</fullName>
    </recommendedName>
    <alternativeName>
        <fullName>Nitric oxide synthase trafficker</fullName>
    </alternativeName>
    <alternativeName>
        <fullName>eNOS trafficking inducer</fullName>
    </alternativeName>
</protein>
<proteinExistence type="evidence at protein level"/>
<feature type="chain" id="PRO_0000289088" description="Nostrin">
    <location>
        <begin position="1"/>
        <end position="505"/>
    </location>
</feature>
<feature type="domain" description="F-BAR" evidence="7">
    <location>
        <begin position="1"/>
        <end position="260"/>
    </location>
</feature>
<feature type="domain" description="REM-1" evidence="8">
    <location>
        <begin position="292"/>
        <end position="372"/>
    </location>
</feature>
<feature type="domain" description="SH3" evidence="6">
    <location>
        <begin position="437"/>
        <end position="496"/>
    </location>
</feature>
<feature type="coiled-coil region" evidence="5">
    <location>
        <begin position="101"/>
        <end position="128"/>
    </location>
</feature>
<feature type="coiled-coil region" evidence="5">
    <location>
        <begin position="160"/>
        <end position="222"/>
    </location>
</feature>
<feature type="coiled-coil region" evidence="5">
    <location>
        <begin position="295"/>
        <end position="332"/>
    </location>
</feature>
<feature type="modified residue" description="Phosphoserine" evidence="2">
    <location>
        <position position="114"/>
    </location>
</feature>
<feature type="modified residue" description="Phosphoserine" evidence="3">
    <location>
        <position position="478"/>
    </location>
</feature>
<sequence length="505" mass="57307">MRDPLTDCSYNKVYKNLKEFSQNGEDFCKQITSILQQRANLEINYAKGLQKLATKLSKTLQSAKKNCLVSAWAWVSEGMKSAGDLHQKLGKAIELEAIKPAHQVLSAHEKKRKSLENEVEKTANLVISNWNQQIKAKKKLMVSTKKHEALFHLVESSKQITTEKEKQKLLNKLKKSTEKLSKEDENYYQKNVASCSTRLKWENTLENCFQSILELEKERIQLLCNNLNQYSQHISVFGQTLTTCHTQIHCAISKIDIEKDIQALMEETTVSSTENKSEFLLTDYFEEDPKNAMSKERQTSSIKSKLLRLQKDIEKASRDQEGLERMLRAYSSHSSFSDSESKKSTAALMDENSLKLDLLQANSYKLSSVLAELEQRPQPNHPCSNSIFKWKEKQTHSSVKISRPVLMKRLENVVNRASSDGQRIPSPSSTASGVTQLGNGLCKALYPFQARQDDELDLEKGDIVTIHKKKDEGWWFGSLKGKKGHFPAAYVEELPLNAGDTASQA</sequence>
<gene>
    <name evidence="4" type="primary">NOSTRIN</name>
</gene>
<organism>
    <name type="scientific">Bos taurus</name>
    <name type="common">Bovine</name>
    <dbReference type="NCBI Taxonomy" id="9913"/>
    <lineage>
        <taxon>Eukaryota</taxon>
        <taxon>Metazoa</taxon>
        <taxon>Chordata</taxon>
        <taxon>Craniata</taxon>
        <taxon>Vertebrata</taxon>
        <taxon>Euteleostomi</taxon>
        <taxon>Mammalia</taxon>
        <taxon>Eutheria</taxon>
        <taxon>Laurasiatheria</taxon>
        <taxon>Artiodactyla</taxon>
        <taxon>Ruminantia</taxon>
        <taxon>Pecora</taxon>
        <taxon>Bovidae</taxon>
        <taxon>Bovinae</taxon>
        <taxon>Bos</taxon>
    </lineage>
</organism>
<reference key="1">
    <citation type="submission" date="2005-09" db="EMBL/GenBank/DDBJ databases">
        <authorList>
            <consortium name="NIH - Mammalian Gene Collection (MGC) project"/>
        </authorList>
    </citation>
    <scope>NUCLEOTIDE SEQUENCE [LARGE SCALE MRNA]</scope>
    <source>
        <strain>Hereford</strain>
        <tissue>Fetal liver</tissue>
    </source>
</reference>
<reference key="2">
    <citation type="journal article" date="2007" name="Am. J. Physiol.">
        <title>Aberrant cytoplasmic sequestration of eNOS in endothelial cells after monocrotaline, hypoxia, and senescence: live-cell caveolar and cytoplasmic NO imaging.</title>
        <authorList>
            <person name="Mukhopadhyay S."/>
            <person name="Xu F."/>
            <person name="Sehgal P.B."/>
        </authorList>
    </citation>
    <scope>SUBCELLULAR LOCATION</scope>
    <scope>TISSUE SPECIFICITY</scope>
</reference>
<accession>Q2KJB5</accession>
<evidence type="ECO:0000250" key="1"/>
<evidence type="ECO:0000250" key="2">
    <source>
        <dbReference type="UniProtKB" id="Q5I0D6"/>
    </source>
</evidence>
<evidence type="ECO:0000250" key="3">
    <source>
        <dbReference type="UniProtKB" id="Q6WKZ7"/>
    </source>
</evidence>
<evidence type="ECO:0000250" key="4">
    <source>
        <dbReference type="UniProtKB" id="Q8IVI9"/>
    </source>
</evidence>
<evidence type="ECO:0000255" key="5"/>
<evidence type="ECO:0000255" key="6">
    <source>
        <dbReference type="PROSITE-ProRule" id="PRU00192"/>
    </source>
</evidence>
<evidence type="ECO:0000255" key="7">
    <source>
        <dbReference type="PROSITE-ProRule" id="PRU01077"/>
    </source>
</evidence>
<evidence type="ECO:0000255" key="8">
    <source>
        <dbReference type="PROSITE-ProRule" id="PRU01207"/>
    </source>
</evidence>
<evidence type="ECO:0000269" key="9">
    <source>
    </source>
</evidence>
<comment type="function">
    <text evidence="1">Multivalent adapter protein which may decrease NOS3 activity by inducing its translocation away from the plasma membrane.</text>
</comment>
<comment type="subunit">
    <text evidence="1 2">Homotrimer. Interacts with DAB2. Interacts with NOS3, DNM2, WASL and CAV1 (By similarity). Interacts (via SH3 domain) with DNM2; this interaction allows the recruitment of NOS3 to dynamin-positive structures (By similarity).</text>
</comment>
<comment type="subcellular location">
    <subcellularLocation>
        <location evidence="4">Cell membrane</location>
        <topology evidence="4">Peripheral membrane protein</topology>
        <orientation evidence="4">Cytoplasmic side</orientation>
    </subcellularLocation>
    <subcellularLocation>
        <location evidence="9">Cytoplasmic vesicle</location>
    </subcellularLocation>
    <subcellularLocation>
        <location evidence="4">Cytoplasm</location>
        <location evidence="4">Cytoskeleton</location>
    </subcellularLocation>
    <text evidence="4">Enriched in selected actin structures.</text>
</comment>
<comment type="tissue specificity">
    <text evidence="9">Present in pulmonary arterial endothelial cells (at protein level).</text>
</comment>
<comment type="domain">
    <text evidence="1">The SH3 domain mediates interaction with NOS3, DNM2 and WASL.</text>
</comment>
<comment type="domain">
    <text evidence="1">The F-BAR domain is necessary for membrane targeting.</text>
</comment>
<keyword id="KW-1003">Cell membrane</keyword>
<keyword id="KW-0175">Coiled coil</keyword>
<keyword id="KW-0963">Cytoplasm</keyword>
<keyword id="KW-0968">Cytoplasmic vesicle</keyword>
<keyword id="KW-0206">Cytoskeleton</keyword>
<keyword id="KW-0254">Endocytosis</keyword>
<keyword id="KW-0472">Membrane</keyword>
<keyword id="KW-0597">Phosphoprotein</keyword>
<keyword id="KW-1185">Reference proteome</keyword>
<keyword id="KW-0728">SH3 domain</keyword>
<name>NOSTN_BOVIN</name>
<dbReference type="EMBL" id="BC105426">
    <property type="protein sequence ID" value="AAI05427.1"/>
    <property type="molecule type" value="mRNA"/>
</dbReference>
<dbReference type="RefSeq" id="NP_001039722.1">
    <property type="nucleotide sequence ID" value="NM_001046257.2"/>
</dbReference>
<dbReference type="SMR" id="Q2KJB5"/>
<dbReference type="FunCoup" id="Q2KJB5">
    <property type="interactions" value="74"/>
</dbReference>
<dbReference type="STRING" id="9913.ENSBTAP00000069226"/>
<dbReference type="PaxDb" id="9913-ENSBTAP00000013682"/>
<dbReference type="GeneID" id="521834"/>
<dbReference type="KEGG" id="bta:521834"/>
<dbReference type="CTD" id="115677"/>
<dbReference type="eggNOG" id="KOG4429">
    <property type="taxonomic scope" value="Eukaryota"/>
</dbReference>
<dbReference type="InParanoid" id="Q2KJB5"/>
<dbReference type="OrthoDB" id="28357at2759"/>
<dbReference type="Proteomes" id="UP000009136">
    <property type="component" value="Unplaced"/>
</dbReference>
<dbReference type="GO" id="GO:0031410">
    <property type="term" value="C:cytoplasmic vesicle"/>
    <property type="evidence" value="ECO:0007669"/>
    <property type="project" value="UniProtKB-KW"/>
</dbReference>
<dbReference type="GO" id="GO:0005856">
    <property type="term" value="C:cytoskeleton"/>
    <property type="evidence" value="ECO:0007669"/>
    <property type="project" value="UniProtKB-SubCell"/>
</dbReference>
<dbReference type="GO" id="GO:0005886">
    <property type="term" value="C:plasma membrane"/>
    <property type="evidence" value="ECO:0007669"/>
    <property type="project" value="UniProtKB-SubCell"/>
</dbReference>
<dbReference type="GO" id="GO:0006897">
    <property type="term" value="P:endocytosis"/>
    <property type="evidence" value="ECO:0007669"/>
    <property type="project" value="UniProtKB-KW"/>
</dbReference>
<dbReference type="GO" id="GO:0007165">
    <property type="term" value="P:signal transduction"/>
    <property type="evidence" value="ECO:0007669"/>
    <property type="project" value="InterPro"/>
</dbReference>
<dbReference type="CDD" id="cd11823">
    <property type="entry name" value="SH3_Nostrin"/>
    <property type="match status" value="1"/>
</dbReference>
<dbReference type="FunFam" id="2.30.30.40:FF:000186">
    <property type="entry name" value="Nitric oxide synthase trafficking"/>
    <property type="match status" value="1"/>
</dbReference>
<dbReference type="Gene3D" id="6.10.140.470">
    <property type="match status" value="1"/>
</dbReference>
<dbReference type="Gene3D" id="1.20.1270.60">
    <property type="entry name" value="Arfaptin homology (AH) domain/BAR domain"/>
    <property type="match status" value="1"/>
</dbReference>
<dbReference type="Gene3D" id="2.30.30.40">
    <property type="entry name" value="SH3 Domains"/>
    <property type="match status" value="1"/>
</dbReference>
<dbReference type="InterPro" id="IPR027267">
    <property type="entry name" value="AH/BAR_dom_sf"/>
</dbReference>
<dbReference type="InterPro" id="IPR031160">
    <property type="entry name" value="F_BAR"/>
</dbReference>
<dbReference type="InterPro" id="IPR001060">
    <property type="entry name" value="FCH_dom"/>
</dbReference>
<dbReference type="InterPro" id="IPR011072">
    <property type="entry name" value="HR1_rho-bd"/>
</dbReference>
<dbReference type="InterPro" id="IPR036274">
    <property type="entry name" value="HR1_rpt_sf"/>
</dbReference>
<dbReference type="InterPro" id="IPR035656">
    <property type="entry name" value="Nostrin_SH3"/>
</dbReference>
<dbReference type="InterPro" id="IPR036028">
    <property type="entry name" value="SH3-like_dom_sf"/>
</dbReference>
<dbReference type="InterPro" id="IPR001452">
    <property type="entry name" value="SH3_domain"/>
</dbReference>
<dbReference type="PANTHER" id="PTHR23065:SF7">
    <property type="entry name" value="NOSTRIN, ISOFORM H"/>
    <property type="match status" value="1"/>
</dbReference>
<dbReference type="PANTHER" id="PTHR23065">
    <property type="entry name" value="PROLINE-SERINE-THREONINE PHOSPHATASE INTERACTING PROTEIN 1"/>
    <property type="match status" value="1"/>
</dbReference>
<dbReference type="Pfam" id="PF00611">
    <property type="entry name" value="FCH"/>
    <property type="match status" value="1"/>
</dbReference>
<dbReference type="Pfam" id="PF14604">
    <property type="entry name" value="SH3_9"/>
    <property type="match status" value="1"/>
</dbReference>
<dbReference type="PRINTS" id="PR00452">
    <property type="entry name" value="SH3DOMAIN"/>
</dbReference>
<dbReference type="SMART" id="SM00326">
    <property type="entry name" value="SH3"/>
    <property type="match status" value="1"/>
</dbReference>
<dbReference type="SUPFAM" id="SSF103657">
    <property type="entry name" value="BAR/IMD domain-like"/>
    <property type="match status" value="1"/>
</dbReference>
<dbReference type="SUPFAM" id="SSF46585">
    <property type="entry name" value="HR1 repeat"/>
    <property type="match status" value="1"/>
</dbReference>
<dbReference type="SUPFAM" id="SSF50044">
    <property type="entry name" value="SH3-domain"/>
    <property type="match status" value="1"/>
</dbReference>
<dbReference type="PROSITE" id="PS51741">
    <property type="entry name" value="F_BAR"/>
    <property type="match status" value="1"/>
</dbReference>
<dbReference type="PROSITE" id="PS51860">
    <property type="entry name" value="REM_1"/>
    <property type="match status" value="1"/>
</dbReference>
<dbReference type="PROSITE" id="PS50002">
    <property type="entry name" value="SH3"/>
    <property type="match status" value="1"/>
</dbReference>